<name>PLSY_NEIMB</name>
<feature type="chain" id="PRO_0000188411" description="Glycerol-3-phosphate acyltransferase">
    <location>
        <begin position="1"/>
        <end position="200"/>
    </location>
</feature>
<feature type="transmembrane region" description="Helical" evidence="1">
    <location>
        <begin position="2"/>
        <end position="22"/>
    </location>
</feature>
<feature type="transmembrane region" description="Helical" evidence="1">
    <location>
        <begin position="51"/>
        <end position="71"/>
    </location>
</feature>
<feature type="transmembrane region" description="Helical" evidence="1">
    <location>
        <begin position="84"/>
        <end position="104"/>
    </location>
</feature>
<feature type="transmembrane region" description="Helical" evidence="1">
    <location>
        <begin position="114"/>
        <end position="134"/>
    </location>
</feature>
<feature type="transmembrane region" description="Helical" evidence="1">
    <location>
        <begin position="159"/>
        <end position="179"/>
    </location>
</feature>
<comment type="function">
    <text evidence="1">Catalyzes the transfer of an acyl group from acyl-phosphate (acyl-PO(4)) to glycerol-3-phosphate (G3P) to form lysophosphatidic acid (LPA). This enzyme utilizes acyl-phosphate as fatty acyl donor, but not acyl-CoA or acyl-ACP.</text>
</comment>
<comment type="catalytic activity">
    <reaction evidence="1">
        <text>an acyl phosphate + sn-glycerol 3-phosphate = a 1-acyl-sn-glycero-3-phosphate + phosphate</text>
        <dbReference type="Rhea" id="RHEA:34075"/>
        <dbReference type="ChEBI" id="CHEBI:43474"/>
        <dbReference type="ChEBI" id="CHEBI:57597"/>
        <dbReference type="ChEBI" id="CHEBI:57970"/>
        <dbReference type="ChEBI" id="CHEBI:59918"/>
        <dbReference type="EC" id="2.3.1.275"/>
    </reaction>
</comment>
<comment type="pathway">
    <text evidence="1">Lipid metabolism; phospholipid metabolism.</text>
</comment>
<comment type="subunit">
    <text evidence="1">Probably interacts with PlsX.</text>
</comment>
<comment type="subcellular location">
    <subcellularLocation>
        <location evidence="1">Cell inner membrane</location>
        <topology evidence="1">Multi-pass membrane protein</topology>
    </subcellularLocation>
</comment>
<comment type="similarity">
    <text evidence="1">Belongs to the PlsY family.</text>
</comment>
<keyword id="KW-0997">Cell inner membrane</keyword>
<keyword id="KW-1003">Cell membrane</keyword>
<keyword id="KW-0444">Lipid biosynthesis</keyword>
<keyword id="KW-0443">Lipid metabolism</keyword>
<keyword id="KW-0472">Membrane</keyword>
<keyword id="KW-0594">Phospholipid biosynthesis</keyword>
<keyword id="KW-1208">Phospholipid metabolism</keyword>
<keyword id="KW-1185">Reference proteome</keyword>
<keyword id="KW-0808">Transferase</keyword>
<keyword id="KW-0812">Transmembrane</keyword>
<keyword id="KW-1133">Transmembrane helix</keyword>
<gene>
    <name evidence="1" type="primary">plsY</name>
    <name type="ordered locus">NMB1062</name>
</gene>
<reference key="1">
    <citation type="journal article" date="2000" name="Science">
        <title>Complete genome sequence of Neisseria meningitidis serogroup B strain MC58.</title>
        <authorList>
            <person name="Tettelin H."/>
            <person name="Saunders N.J."/>
            <person name="Heidelberg J.F."/>
            <person name="Jeffries A.C."/>
            <person name="Nelson K.E."/>
            <person name="Eisen J.A."/>
            <person name="Ketchum K.A."/>
            <person name="Hood D.W."/>
            <person name="Peden J.F."/>
            <person name="Dodson R.J."/>
            <person name="Nelson W.C."/>
            <person name="Gwinn M.L."/>
            <person name="DeBoy R.T."/>
            <person name="Peterson J.D."/>
            <person name="Hickey E.K."/>
            <person name="Haft D.H."/>
            <person name="Salzberg S.L."/>
            <person name="White O."/>
            <person name="Fleischmann R.D."/>
            <person name="Dougherty B.A."/>
            <person name="Mason T.M."/>
            <person name="Ciecko A."/>
            <person name="Parksey D.S."/>
            <person name="Blair E."/>
            <person name="Cittone H."/>
            <person name="Clark E.B."/>
            <person name="Cotton M.D."/>
            <person name="Utterback T.R."/>
            <person name="Khouri H.M."/>
            <person name="Qin H."/>
            <person name="Vamathevan J.J."/>
            <person name="Gill J."/>
            <person name="Scarlato V."/>
            <person name="Masignani V."/>
            <person name="Pizza M."/>
            <person name="Grandi G."/>
            <person name="Sun L."/>
            <person name="Smith H.O."/>
            <person name="Fraser C.M."/>
            <person name="Moxon E.R."/>
            <person name="Rappuoli R."/>
            <person name="Venter J.C."/>
        </authorList>
    </citation>
    <scope>NUCLEOTIDE SEQUENCE [LARGE SCALE GENOMIC DNA]</scope>
    <source>
        <strain>ATCC BAA-335 / MC58</strain>
    </source>
</reference>
<accession>Q9JZG9</accession>
<sequence length="200" mass="20685">MFNIPAVAVSYLIGSLSFAVIVSKYYGMDDPRTYGSGNPGATNVLRSGKKKAAALTLLGDAAKGLVAVLLARVLQEPLGLSDSAIAAVALAALVGHMWPVFFGFKGGKGVATALGVLLALSPATALVCALIWLVMAFGFKVSSLAALTATIAAPVAASFFMPHVSWVWATVAIALLVLFRHKSNIVKLLEGRESKIGGSR</sequence>
<dbReference type="EC" id="2.3.1.275" evidence="1"/>
<dbReference type="EMBL" id="AE002098">
    <property type="protein sequence ID" value="AAF41458.1"/>
    <property type="molecule type" value="Genomic_DNA"/>
</dbReference>
<dbReference type="PIR" id="H81126">
    <property type="entry name" value="H81126"/>
</dbReference>
<dbReference type="RefSeq" id="NP_274095.1">
    <property type="nucleotide sequence ID" value="NC_003112.2"/>
</dbReference>
<dbReference type="RefSeq" id="WP_002225265.1">
    <property type="nucleotide sequence ID" value="NC_003112.2"/>
</dbReference>
<dbReference type="SMR" id="Q9JZG9"/>
<dbReference type="FunCoup" id="Q9JZG9">
    <property type="interactions" value="199"/>
</dbReference>
<dbReference type="STRING" id="122586.NMB1062"/>
<dbReference type="PaxDb" id="122586-NMB1062"/>
<dbReference type="KEGG" id="nme:NMB1062"/>
<dbReference type="PATRIC" id="fig|122586.8.peg.1350"/>
<dbReference type="HOGENOM" id="CLU_081254_0_0_4"/>
<dbReference type="InParanoid" id="Q9JZG9"/>
<dbReference type="OrthoDB" id="9777124at2"/>
<dbReference type="UniPathway" id="UPA00085"/>
<dbReference type="Proteomes" id="UP000000425">
    <property type="component" value="Chromosome"/>
</dbReference>
<dbReference type="GO" id="GO:0005886">
    <property type="term" value="C:plasma membrane"/>
    <property type="evidence" value="ECO:0000318"/>
    <property type="project" value="GO_Central"/>
</dbReference>
<dbReference type="GO" id="GO:0043772">
    <property type="term" value="F:acyl-phosphate glycerol-3-phosphate acyltransferase activity"/>
    <property type="evidence" value="ECO:0007669"/>
    <property type="project" value="UniProtKB-UniRule"/>
</dbReference>
<dbReference type="GO" id="GO:0008654">
    <property type="term" value="P:phospholipid biosynthetic process"/>
    <property type="evidence" value="ECO:0007669"/>
    <property type="project" value="UniProtKB-UniRule"/>
</dbReference>
<dbReference type="HAMAP" id="MF_01043">
    <property type="entry name" value="PlsY"/>
    <property type="match status" value="1"/>
</dbReference>
<dbReference type="InterPro" id="IPR003811">
    <property type="entry name" value="G3P_acylTferase_PlsY"/>
</dbReference>
<dbReference type="NCBIfam" id="TIGR00023">
    <property type="entry name" value="glycerol-3-phosphate 1-O-acyltransferase PlsY"/>
    <property type="match status" value="1"/>
</dbReference>
<dbReference type="PANTHER" id="PTHR30309:SF0">
    <property type="entry name" value="GLYCEROL-3-PHOSPHATE ACYLTRANSFERASE-RELATED"/>
    <property type="match status" value="1"/>
</dbReference>
<dbReference type="PANTHER" id="PTHR30309">
    <property type="entry name" value="INNER MEMBRANE PROTEIN YGIH"/>
    <property type="match status" value="1"/>
</dbReference>
<dbReference type="Pfam" id="PF02660">
    <property type="entry name" value="G3P_acyltransf"/>
    <property type="match status" value="1"/>
</dbReference>
<dbReference type="SMART" id="SM01207">
    <property type="entry name" value="G3P_acyltransf"/>
    <property type="match status" value="1"/>
</dbReference>
<organism>
    <name type="scientific">Neisseria meningitidis serogroup B (strain ATCC BAA-335 / MC58)</name>
    <dbReference type="NCBI Taxonomy" id="122586"/>
    <lineage>
        <taxon>Bacteria</taxon>
        <taxon>Pseudomonadati</taxon>
        <taxon>Pseudomonadota</taxon>
        <taxon>Betaproteobacteria</taxon>
        <taxon>Neisseriales</taxon>
        <taxon>Neisseriaceae</taxon>
        <taxon>Neisseria</taxon>
    </lineage>
</organism>
<protein>
    <recommendedName>
        <fullName evidence="1">Glycerol-3-phosphate acyltransferase</fullName>
    </recommendedName>
    <alternativeName>
        <fullName evidence="1">Acyl-PO4 G3P acyltransferase</fullName>
    </alternativeName>
    <alternativeName>
        <fullName evidence="1">Acyl-phosphate--glycerol-3-phosphate acyltransferase</fullName>
    </alternativeName>
    <alternativeName>
        <fullName evidence="1">G3P acyltransferase</fullName>
        <shortName evidence="1">GPAT</shortName>
        <ecNumber evidence="1">2.3.1.275</ecNumber>
    </alternativeName>
    <alternativeName>
        <fullName evidence="1">Lysophosphatidic acid synthase</fullName>
        <shortName evidence="1">LPA synthase</shortName>
    </alternativeName>
</protein>
<evidence type="ECO:0000255" key="1">
    <source>
        <dbReference type="HAMAP-Rule" id="MF_01043"/>
    </source>
</evidence>
<proteinExistence type="inferred from homology"/>